<evidence type="ECO:0000255" key="1">
    <source>
        <dbReference type="HAMAP-Rule" id="MF_01527"/>
    </source>
</evidence>
<sequence length="265" mass="29365">MNSPIDPAIVMPDVQSSTDTRHIPIQRVGIRGVRHPMLVLAGDGAAQPTVANWTLTVALPAEEKGTHMSRFVALLEKYRATPMTPALFAAMAREMLPLLHAERGDITASFPYFINKSAPVSGVQSLLDYEMQWIARAVGEQVEFELVAQVPVTSLCPCSKAISEYGAHNQRSHVTVSAIVDGDFRMDELIRLVEDEASCELWGLLKRPDEKYVTERAYDNPKFVEDLVRDVAARLKAHPGIGRFRVEAENFESIHNHSAYAVVEG</sequence>
<reference key="1">
    <citation type="journal article" date="2003" name="Nat. Genet.">
        <title>Comparative analysis of the genome sequences of Bordetella pertussis, Bordetella parapertussis and Bordetella bronchiseptica.</title>
        <authorList>
            <person name="Parkhill J."/>
            <person name="Sebaihia M."/>
            <person name="Preston A."/>
            <person name="Murphy L.D."/>
            <person name="Thomson N.R."/>
            <person name="Harris D.E."/>
            <person name="Holden M.T.G."/>
            <person name="Churcher C.M."/>
            <person name="Bentley S.D."/>
            <person name="Mungall K.L."/>
            <person name="Cerdeno-Tarraga A.-M."/>
            <person name="Temple L."/>
            <person name="James K.D."/>
            <person name="Harris B."/>
            <person name="Quail M.A."/>
            <person name="Achtman M."/>
            <person name="Atkin R."/>
            <person name="Baker S."/>
            <person name="Basham D."/>
            <person name="Bason N."/>
            <person name="Cherevach I."/>
            <person name="Chillingworth T."/>
            <person name="Collins M."/>
            <person name="Cronin A."/>
            <person name="Davis P."/>
            <person name="Doggett J."/>
            <person name="Feltwell T."/>
            <person name="Goble A."/>
            <person name="Hamlin N."/>
            <person name="Hauser H."/>
            <person name="Holroyd S."/>
            <person name="Jagels K."/>
            <person name="Leather S."/>
            <person name="Moule S."/>
            <person name="Norberczak H."/>
            <person name="O'Neil S."/>
            <person name="Ormond D."/>
            <person name="Price C."/>
            <person name="Rabbinowitsch E."/>
            <person name="Rutter S."/>
            <person name="Sanders M."/>
            <person name="Saunders D."/>
            <person name="Seeger K."/>
            <person name="Sharp S."/>
            <person name="Simmonds M."/>
            <person name="Skelton J."/>
            <person name="Squares R."/>
            <person name="Squares S."/>
            <person name="Stevens K."/>
            <person name="Unwin L."/>
            <person name="Whitehead S."/>
            <person name="Barrell B.G."/>
            <person name="Maskell D.J."/>
        </authorList>
    </citation>
    <scope>NUCLEOTIDE SEQUENCE [LARGE SCALE GENOMIC DNA]</scope>
    <source>
        <strain>ATCC BAA-588 / NCTC 13252 / RB50</strain>
    </source>
</reference>
<keyword id="KW-0378">Hydrolase</keyword>
<gene>
    <name evidence="1" type="primary">folE2</name>
    <name type="ordered locus">BB1913</name>
</gene>
<name>GCH4_BORBR</name>
<protein>
    <recommendedName>
        <fullName evidence="1">GTP cyclohydrolase FolE2</fullName>
        <ecNumber evidence="1">3.5.4.16</ecNumber>
    </recommendedName>
</protein>
<feature type="chain" id="PRO_0000147703" description="GTP cyclohydrolase FolE2">
    <location>
        <begin position="1"/>
        <end position="265"/>
    </location>
</feature>
<feature type="site" description="May be catalytically important" evidence="1">
    <location>
        <position position="156"/>
    </location>
</feature>
<comment type="function">
    <text evidence="1">Converts GTP to 7,8-dihydroneopterin triphosphate.</text>
</comment>
<comment type="catalytic activity">
    <reaction evidence="1">
        <text>GTP + H2O = 7,8-dihydroneopterin 3'-triphosphate + formate + H(+)</text>
        <dbReference type="Rhea" id="RHEA:17473"/>
        <dbReference type="ChEBI" id="CHEBI:15377"/>
        <dbReference type="ChEBI" id="CHEBI:15378"/>
        <dbReference type="ChEBI" id="CHEBI:15740"/>
        <dbReference type="ChEBI" id="CHEBI:37565"/>
        <dbReference type="ChEBI" id="CHEBI:58462"/>
        <dbReference type="EC" id="3.5.4.16"/>
    </reaction>
</comment>
<comment type="pathway">
    <text evidence="1">Cofactor biosynthesis; 7,8-dihydroneopterin triphosphate biosynthesis; 7,8-dihydroneopterin triphosphate from GTP: step 1/1.</text>
</comment>
<comment type="similarity">
    <text evidence="1">Belongs to the GTP cyclohydrolase IV family.</text>
</comment>
<dbReference type="EC" id="3.5.4.16" evidence="1"/>
<dbReference type="EMBL" id="BX640442">
    <property type="protein sequence ID" value="CAE32410.1"/>
    <property type="molecule type" value="Genomic_DNA"/>
</dbReference>
<dbReference type="RefSeq" id="WP_003813103.1">
    <property type="nucleotide sequence ID" value="NC_002927.3"/>
</dbReference>
<dbReference type="SMR" id="Q7WL36"/>
<dbReference type="GeneID" id="93204249"/>
<dbReference type="KEGG" id="bbr:BB1913"/>
<dbReference type="eggNOG" id="COG1469">
    <property type="taxonomic scope" value="Bacteria"/>
</dbReference>
<dbReference type="HOGENOM" id="CLU_062816_1_1_4"/>
<dbReference type="UniPathway" id="UPA00848">
    <property type="reaction ID" value="UER00151"/>
</dbReference>
<dbReference type="Proteomes" id="UP000001027">
    <property type="component" value="Chromosome"/>
</dbReference>
<dbReference type="GO" id="GO:0003934">
    <property type="term" value="F:GTP cyclohydrolase I activity"/>
    <property type="evidence" value="ECO:0007669"/>
    <property type="project" value="UniProtKB-UniRule"/>
</dbReference>
<dbReference type="GO" id="GO:0046654">
    <property type="term" value="P:tetrahydrofolate biosynthetic process"/>
    <property type="evidence" value="ECO:0007669"/>
    <property type="project" value="UniProtKB-UniRule"/>
</dbReference>
<dbReference type="Gene3D" id="3.10.270.10">
    <property type="entry name" value="Urate Oxidase"/>
    <property type="match status" value="1"/>
</dbReference>
<dbReference type="HAMAP" id="MF_01527_B">
    <property type="entry name" value="GTP_cyclohydrol_B"/>
    <property type="match status" value="1"/>
</dbReference>
<dbReference type="InterPro" id="IPR022838">
    <property type="entry name" value="GTP_cyclohydrolase_FolE2"/>
</dbReference>
<dbReference type="InterPro" id="IPR003801">
    <property type="entry name" value="GTP_cyclohydrolase_FolE2/MptA"/>
</dbReference>
<dbReference type="NCBIfam" id="NF010200">
    <property type="entry name" value="PRK13674.1-1"/>
    <property type="match status" value="1"/>
</dbReference>
<dbReference type="PANTHER" id="PTHR36445">
    <property type="entry name" value="GTP CYCLOHYDROLASE MPTA"/>
    <property type="match status" value="1"/>
</dbReference>
<dbReference type="PANTHER" id="PTHR36445:SF1">
    <property type="entry name" value="GTP CYCLOHYDROLASE MPTA"/>
    <property type="match status" value="1"/>
</dbReference>
<dbReference type="Pfam" id="PF02649">
    <property type="entry name" value="GCHY-1"/>
    <property type="match status" value="1"/>
</dbReference>
<organism>
    <name type="scientific">Bordetella bronchiseptica (strain ATCC BAA-588 / NCTC 13252 / RB50)</name>
    <name type="common">Alcaligenes bronchisepticus</name>
    <dbReference type="NCBI Taxonomy" id="257310"/>
    <lineage>
        <taxon>Bacteria</taxon>
        <taxon>Pseudomonadati</taxon>
        <taxon>Pseudomonadota</taxon>
        <taxon>Betaproteobacteria</taxon>
        <taxon>Burkholderiales</taxon>
        <taxon>Alcaligenaceae</taxon>
        <taxon>Bordetella</taxon>
    </lineage>
</organism>
<accession>Q7WL36</accession>
<proteinExistence type="inferred from homology"/>